<proteinExistence type="predicted"/>
<reference key="1">
    <citation type="journal article" date="1994" name="Nucleic Acids Res.">
        <title>RNP1, a new ribonucleoprotein gene of the yeast Saccharomyces cerevisiae.</title>
        <authorList>
            <person name="Cusick M.E."/>
        </authorList>
    </citation>
    <scope>NUCLEOTIDE SEQUENCE [GENOMIC DNA]</scope>
</reference>
<reference key="2">
    <citation type="journal article" date="1997" name="Nature">
        <title>The nucleotide sequence of Saccharomyces cerevisiae chromosome XII.</title>
        <authorList>
            <person name="Johnston M."/>
            <person name="Hillier L.W."/>
            <person name="Riles L."/>
            <person name="Albermann K."/>
            <person name="Andre B."/>
            <person name="Ansorge W."/>
            <person name="Benes V."/>
            <person name="Brueckner M."/>
            <person name="Delius H."/>
            <person name="Dubois E."/>
            <person name="Duesterhoeft A."/>
            <person name="Entian K.-D."/>
            <person name="Floeth M."/>
            <person name="Goffeau A."/>
            <person name="Hebling U."/>
            <person name="Heumann K."/>
            <person name="Heuss-Neitzel D."/>
            <person name="Hilbert H."/>
            <person name="Hilger F."/>
            <person name="Kleine K."/>
            <person name="Koetter P."/>
            <person name="Louis E.J."/>
            <person name="Messenguy F."/>
            <person name="Mewes H.-W."/>
            <person name="Miosga T."/>
            <person name="Moestl D."/>
            <person name="Mueller-Auer S."/>
            <person name="Nentwich U."/>
            <person name="Obermaier B."/>
            <person name="Piravandi E."/>
            <person name="Pohl T.M."/>
            <person name="Portetelle D."/>
            <person name="Purnelle B."/>
            <person name="Rechmann S."/>
            <person name="Rieger M."/>
            <person name="Rinke M."/>
            <person name="Rose M."/>
            <person name="Scharfe M."/>
            <person name="Scherens B."/>
            <person name="Scholler P."/>
            <person name="Schwager C."/>
            <person name="Schwarz S."/>
            <person name="Underwood A.P."/>
            <person name="Urrestarazu L.A."/>
            <person name="Vandenbol M."/>
            <person name="Verhasselt P."/>
            <person name="Vierendeels F."/>
            <person name="Voet M."/>
            <person name="Volckaert G."/>
            <person name="Voss H."/>
            <person name="Wambutt R."/>
            <person name="Wedler E."/>
            <person name="Wedler H."/>
            <person name="Zimmermann F.K."/>
            <person name="Zollner A."/>
            <person name="Hani J."/>
            <person name="Hoheisel J.D."/>
        </authorList>
    </citation>
    <scope>NUCLEOTIDE SEQUENCE [LARGE SCALE GENOMIC DNA]</scope>
    <source>
        <strain>ATCC 204508 / S288c</strain>
    </source>
</reference>
<reference key="3">
    <citation type="journal article" date="2014" name="G3 (Bethesda)">
        <title>The reference genome sequence of Saccharomyces cerevisiae: Then and now.</title>
        <authorList>
            <person name="Engel S.R."/>
            <person name="Dietrich F.S."/>
            <person name="Fisk D.G."/>
            <person name="Binkley G."/>
            <person name="Balakrishnan R."/>
            <person name="Costanzo M.C."/>
            <person name="Dwight S.S."/>
            <person name="Hitz B.C."/>
            <person name="Karra K."/>
            <person name="Nash R.S."/>
            <person name="Weng S."/>
            <person name="Wong E.D."/>
            <person name="Lloyd P."/>
            <person name="Skrzypek M.S."/>
            <person name="Miyasato S.R."/>
            <person name="Simison M."/>
            <person name="Cherry J.M."/>
        </authorList>
    </citation>
    <scope>GENOME REANNOTATION</scope>
    <source>
        <strain>ATCC 204508 / S288c</strain>
    </source>
</reference>
<keyword id="KW-1185">Reference proteome</keyword>
<keyword id="KW-0677">Repeat</keyword>
<keyword id="KW-0694">RNA-binding</keyword>
<organism>
    <name type="scientific">Saccharomyces cerevisiae (strain ATCC 204508 / S288c)</name>
    <name type="common">Baker's yeast</name>
    <dbReference type="NCBI Taxonomy" id="559292"/>
    <lineage>
        <taxon>Eukaryota</taxon>
        <taxon>Fungi</taxon>
        <taxon>Dikarya</taxon>
        <taxon>Ascomycota</taxon>
        <taxon>Saccharomycotina</taxon>
        <taxon>Saccharomycetes</taxon>
        <taxon>Saccharomycetales</taxon>
        <taxon>Saccharomycetaceae</taxon>
        <taxon>Saccharomyces</taxon>
    </lineage>
</organism>
<protein>
    <recommendedName>
        <fullName>Ribonucleoprotein 1</fullName>
    </recommendedName>
</protein>
<evidence type="ECO:0000255" key="1">
    <source>
        <dbReference type="PROSITE-ProRule" id="PRU00176"/>
    </source>
</evidence>
<name>RNP1_YEAST</name>
<dbReference type="EMBL" id="M88608">
    <property type="protein sequence ID" value="AAA20991.1"/>
    <property type="molecule type" value="Genomic_DNA"/>
</dbReference>
<dbReference type="EMBL" id="Z73152">
    <property type="protein sequence ID" value="CAA97499.1"/>
    <property type="molecule type" value="Genomic_DNA"/>
</dbReference>
<dbReference type="EMBL" id="BK006945">
    <property type="protein sequence ID" value="DAA09277.1"/>
    <property type="molecule type" value="Genomic_DNA"/>
</dbReference>
<dbReference type="PIR" id="S64798">
    <property type="entry name" value="S64798"/>
</dbReference>
<dbReference type="RefSeq" id="NP_013054.1">
    <property type="nucleotide sequence ID" value="NM_001181866.1"/>
</dbReference>
<dbReference type="SMR" id="P32385"/>
<dbReference type="BioGRID" id="31268">
    <property type="interactions" value="83"/>
</dbReference>
<dbReference type="DIP" id="DIP-1568N"/>
<dbReference type="FunCoup" id="P32385">
    <property type="interactions" value="246"/>
</dbReference>
<dbReference type="IntAct" id="P32385">
    <property type="interactions" value="3"/>
</dbReference>
<dbReference type="MINT" id="P32385"/>
<dbReference type="STRING" id="4932.YLL046C"/>
<dbReference type="iPTMnet" id="P32385"/>
<dbReference type="PaxDb" id="4932-YLL046C"/>
<dbReference type="PeptideAtlas" id="P32385"/>
<dbReference type="EnsemblFungi" id="YLL046C_mRNA">
    <property type="protein sequence ID" value="YLL046C"/>
    <property type="gene ID" value="YLL046C"/>
</dbReference>
<dbReference type="GeneID" id="850680"/>
<dbReference type="KEGG" id="sce:YLL046C"/>
<dbReference type="AGR" id="SGD:S000003969"/>
<dbReference type="SGD" id="S000003969">
    <property type="gene designation" value="RNP1"/>
</dbReference>
<dbReference type="VEuPathDB" id="FungiDB:YLL046C"/>
<dbReference type="HOGENOM" id="CLU_1094808_0_0_1"/>
<dbReference type="InParanoid" id="P32385"/>
<dbReference type="OrthoDB" id="1099063at2759"/>
<dbReference type="BioCyc" id="YEAST:G3O-32146-MONOMER"/>
<dbReference type="PRO" id="PR:P32385"/>
<dbReference type="Proteomes" id="UP000002311">
    <property type="component" value="Chromosome XII"/>
</dbReference>
<dbReference type="RNAct" id="P32385">
    <property type="molecule type" value="protein"/>
</dbReference>
<dbReference type="GO" id="GO:0005737">
    <property type="term" value="C:cytoplasm"/>
    <property type="evidence" value="ECO:0000314"/>
    <property type="project" value="SGD"/>
</dbReference>
<dbReference type="GO" id="GO:0005634">
    <property type="term" value="C:nucleus"/>
    <property type="evidence" value="ECO:0000318"/>
    <property type="project" value="GO_Central"/>
</dbReference>
<dbReference type="GO" id="GO:1990904">
    <property type="term" value="C:ribonucleoprotein complex"/>
    <property type="evidence" value="ECO:0000318"/>
    <property type="project" value="GO_Central"/>
</dbReference>
<dbReference type="GO" id="GO:0003729">
    <property type="term" value="F:mRNA binding"/>
    <property type="evidence" value="ECO:0000318"/>
    <property type="project" value="GO_Central"/>
</dbReference>
<dbReference type="GO" id="GO:0003723">
    <property type="term" value="F:RNA binding"/>
    <property type="evidence" value="ECO:0000250"/>
    <property type="project" value="SGD"/>
</dbReference>
<dbReference type="GO" id="GO:0042254">
    <property type="term" value="P:ribosome biogenesis"/>
    <property type="evidence" value="ECO:0000315"/>
    <property type="project" value="SGD"/>
</dbReference>
<dbReference type="CDD" id="cd00590">
    <property type="entry name" value="RRM_SF"/>
    <property type="match status" value="1"/>
</dbReference>
<dbReference type="Gene3D" id="3.30.70.330">
    <property type="match status" value="2"/>
</dbReference>
<dbReference type="InterPro" id="IPR012677">
    <property type="entry name" value="Nucleotide-bd_a/b_plait_sf"/>
</dbReference>
<dbReference type="InterPro" id="IPR035979">
    <property type="entry name" value="RBD_domain_sf"/>
</dbReference>
<dbReference type="InterPro" id="IPR000504">
    <property type="entry name" value="RRM_dom"/>
</dbReference>
<dbReference type="InterPro" id="IPR050374">
    <property type="entry name" value="RRT5_SRSF_SR"/>
</dbReference>
<dbReference type="PANTHER" id="PTHR23003:SF56">
    <property type="entry name" value="RIBONUCLEOPROTEIN 1-RELATED"/>
    <property type="match status" value="1"/>
</dbReference>
<dbReference type="PANTHER" id="PTHR23003">
    <property type="entry name" value="RNA RECOGNITION MOTIF RRM DOMAIN CONTAINING PROTEIN"/>
    <property type="match status" value="1"/>
</dbReference>
<dbReference type="Pfam" id="PF00076">
    <property type="entry name" value="RRM_1"/>
    <property type="match status" value="1"/>
</dbReference>
<dbReference type="SMART" id="SM00360">
    <property type="entry name" value="RRM"/>
    <property type="match status" value="2"/>
</dbReference>
<dbReference type="SUPFAM" id="SSF54928">
    <property type="entry name" value="RNA-binding domain, RBD"/>
    <property type="match status" value="1"/>
</dbReference>
<dbReference type="PROSITE" id="PS50102">
    <property type="entry name" value="RRM"/>
    <property type="match status" value="2"/>
</dbReference>
<accession>P32385</accession>
<accession>D6VXW1</accession>
<gene>
    <name type="primary">RNP1</name>
    <name type="ordered locus">YLL046C</name>
</gene>
<feature type="chain" id="PRO_0000081810" description="Ribonucleoprotein 1">
    <location>
        <begin position="1"/>
        <end position="249"/>
    </location>
</feature>
<feature type="domain" description="RRM 1" evidence="1">
    <location>
        <begin position="35"/>
        <end position="114"/>
    </location>
</feature>
<feature type="domain" description="RRM 2" evidence="1">
    <location>
        <begin position="140"/>
        <end position="231"/>
    </location>
</feature>
<sequence length="249" mass="28862">MLIEEIEFYNVNGKKTTTVVPENTKIKKRVLNDRRTLYVGNLPKNCRKQDLRDLFEPNYGKITINMLKKKPLKKPLKRFAFIEFQEGVNLKKVKEKMNGKIFMNEKIVIENILTKEEKSFEKNQKSNKKTAPDLKPLSTNTLYVKNIPMKSTNEDLAKIFGVDPKNINFVRRELVDLRTNKVFFSDEFHTGEAFIKFDNLGTGDSIQKKCREFKGRKASNGRVLLVKIASAKKNEQKQEGGDNTKIKQN</sequence>